<name>VPB18_ARCFU</name>
<reference key="1">
    <citation type="journal article" date="1997" name="Nature">
        <title>The complete genome sequence of the hyperthermophilic, sulphate-reducing archaeon Archaeoglobus fulgidus.</title>
        <authorList>
            <person name="Klenk H.-P."/>
            <person name="Clayton R.A."/>
            <person name="Tomb J.-F."/>
            <person name="White O."/>
            <person name="Nelson K.E."/>
            <person name="Ketchum K.A."/>
            <person name="Dodson R.J."/>
            <person name="Gwinn M.L."/>
            <person name="Hickey E.K."/>
            <person name="Peterson J.D."/>
            <person name="Richardson D.L."/>
            <person name="Kerlavage A.R."/>
            <person name="Graham D.E."/>
            <person name="Kyrpides N.C."/>
            <person name="Fleischmann R.D."/>
            <person name="Quackenbush J."/>
            <person name="Lee N.H."/>
            <person name="Sutton G.G."/>
            <person name="Gill S.R."/>
            <person name="Kirkness E.F."/>
            <person name="Dougherty B.A."/>
            <person name="McKenney K."/>
            <person name="Adams M.D."/>
            <person name="Loftus B.J."/>
            <person name="Peterson S.N."/>
            <person name="Reich C.I."/>
            <person name="McNeil L.K."/>
            <person name="Badger J.H."/>
            <person name="Glodek A."/>
            <person name="Zhou L."/>
            <person name="Overbeek R."/>
            <person name="Gocayne J.D."/>
            <person name="Weidman J.F."/>
            <person name="McDonald L.A."/>
            <person name="Utterback T.R."/>
            <person name="Cotton M.D."/>
            <person name="Spriggs T."/>
            <person name="Artiach P."/>
            <person name="Kaine B.P."/>
            <person name="Sykes S.M."/>
            <person name="Sadow P.W."/>
            <person name="D'Andrea K.P."/>
            <person name="Bowman C."/>
            <person name="Fujii C."/>
            <person name="Garland S.A."/>
            <person name="Mason T.M."/>
            <person name="Olsen G.J."/>
            <person name="Fraser C.M."/>
            <person name="Smith H.O."/>
            <person name="Woese C.R."/>
            <person name="Venter J.C."/>
        </authorList>
    </citation>
    <scope>NUCLEOTIDE SEQUENCE [LARGE SCALE GENOMIC DNA]</scope>
    <source>
        <strain>ATCC 49558 / DSM 4304 / JCM 9628 / NBRC 100126 / VC-16</strain>
    </source>
</reference>
<reference key="2">
    <citation type="journal article" date="2005" name="Nucleic Acids Res.">
        <title>Toxin-antitoxin loci are highly abundant in free-living but lost from host-associated prokaryotes.</title>
        <authorList>
            <person name="Pandey D.P."/>
            <person name="Gerdes K."/>
        </authorList>
    </citation>
    <scope>POSSIBLE FUNCTION</scope>
    <source>
        <strain>ATCC 49558 / DSM 4304 / JCM 9628 / NBRC 100126 / VC-16</strain>
    </source>
</reference>
<dbReference type="EMBL" id="AE000782">
    <property type="protein sequence ID" value="AAB89264.1"/>
    <property type="molecule type" value="Genomic_DNA"/>
</dbReference>
<dbReference type="PIR" id="D69499">
    <property type="entry name" value="D69499"/>
</dbReference>
<dbReference type="RefSeq" id="WP_010879489.1">
    <property type="nucleotide sequence ID" value="NC_000917.1"/>
</dbReference>
<dbReference type="STRING" id="224325.AF_1997"/>
<dbReference type="PaxDb" id="224325-AF_1997"/>
<dbReference type="EnsemblBacteria" id="AAB89264">
    <property type="protein sequence ID" value="AAB89264"/>
    <property type="gene ID" value="AF_1997"/>
</dbReference>
<dbReference type="KEGG" id="afu:AF_1997"/>
<dbReference type="eggNOG" id="arCOG02681">
    <property type="taxonomic scope" value="Archaea"/>
</dbReference>
<dbReference type="HOGENOM" id="CLU_170073_3_0_2"/>
<dbReference type="OrthoDB" id="231302at2157"/>
<dbReference type="PhylomeDB" id="O28282"/>
<dbReference type="Proteomes" id="UP000002199">
    <property type="component" value="Chromosome"/>
</dbReference>
<dbReference type="HAMAP" id="MF_00794">
    <property type="entry name" value="UPF0330"/>
    <property type="match status" value="1"/>
</dbReference>
<dbReference type="InterPro" id="IPR003847">
    <property type="entry name" value="Put_antitoxin"/>
</dbReference>
<dbReference type="NCBIfam" id="NF010250">
    <property type="entry name" value="PRK13696.1-2"/>
    <property type="match status" value="1"/>
</dbReference>
<dbReference type="Pfam" id="PF02697">
    <property type="entry name" value="VAPB_antitox"/>
    <property type="match status" value="1"/>
</dbReference>
<protein>
    <recommendedName>
        <fullName evidence="1">Putative antitoxin VapB18</fullName>
    </recommendedName>
</protein>
<proteinExistence type="inferred from homology"/>
<sequence>MTKTISISDDVYEMLVKIKGKRSFSEVIRELVKKEGNFDLLMVAFGTRSEEEVEKLKREMKEVEEWMQSLCNH</sequence>
<feature type="chain" id="PRO_0000157106" description="Putative antitoxin VapB18">
    <location>
        <begin position="1"/>
        <end position="73"/>
    </location>
</feature>
<evidence type="ECO:0000255" key="1">
    <source>
        <dbReference type="HAMAP-Rule" id="MF_00794"/>
    </source>
</evidence>
<accession>O28282</accession>
<comment type="function">
    <text evidence="1">Possibly the antitoxin component of a type II toxin-antitoxin (TA) system. Its cognate toxin is VapC18 (Potential).</text>
</comment>
<comment type="similarity">
    <text evidence="1">Belongs to the UPF0330 family.</text>
</comment>
<gene>
    <name type="primary">vapB18</name>
    <name type="ordered locus">AF_1997</name>
</gene>
<organism>
    <name type="scientific">Archaeoglobus fulgidus (strain ATCC 49558 / DSM 4304 / JCM 9628 / NBRC 100126 / VC-16)</name>
    <dbReference type="NCBI Taxonomy" id="224325"/>
    <lineage>
        <taxon>Archaea</taxon>
        <taxon>Methanobacteriati</taxon>
        <taxon>Methanobacteriota</taxon>
        <taxon>Archaeoglobi</taxon>
        <taxon>Archaeoglobales</taxon>
        <taxon>Archaeoglobaceae</taxon>
        <taxon>Archaeoglobus</taxon>
    </lineage>
</organism>
<keyword id="KW-1185">Reference proteome</keyword>
<keyword id="KW-1277">Toxin-antitoxin system</keyword>